<name>AMDY_YEAST</name>
<feature type="chain" id="PRO_0000105130" description="Probable amidase">
    <location>
        <begin position="1"/>
        <end position="549"/>
    </location>
</feature>
<feature type="active site" description="Charge relay system" evidence="1">
    <location>
        <position position="132"/>
    </location>
</feature>
<feature type="active site" description="Charge relay system" evidence="1">
    <location>
        <position position="209"/>
    </location>
</feature>
<feature type="active site" description="Acyl-ester intermediate" evidence="1">
    <location>
        <position position="233"/>
    </location>
</feature>
<feature type="sequence conflict" description="In Ref. 1; CAA39514." evidence="2" ref="1">
    <original>G</original>
    <variation>S</variation>
    <location>
        <position position="525"/>
    </location>
</feature>
<accession>P22580</accession>
<accession>D6VSM2</accession>
<sequence length="549" mass="61410">MTVHSTWKEKVQLKKDQLNSKIKDEWKLNSTTITRLKNDKKNLIKNIDDLCSSSENQITHSTIMALRQALEAKELSCHEITAAFCHRAALIHQVVNCLSEIMFSEALRLADYYDSNRPAILPPLYGIPISLKDQCNVEGVDTSLGYLCRTFKPKTKNEESLIVSFLRDLGAIIFVKTTVPSSMMATDTQSNTFGYTYNSINLSFSSGGSSGGEGSLIGAHGSLLGLGTDIGGSIRIPSSYQGLFGLKPTFGRVPYLRVDNSFEGRETIPSVIGPLARDLSDLRYFMSCVINICQPWVQDVKCIPYHFDSSTSKLHDNYVVGIWYGDGVIDPPPSDIRALKTCEDLVNKTKGMKAVKWEPSSELSRELFDLANEADVADSGNEIKNEFEISGEPLLDILKPMVLENGRPPYTVNEWWDLTKRVYNAQQLMRDYYLSFPESERPDVIISPTTLMPFRPGDMLKTTLRYILLFNVLNFPSLSIPVGSVDCQIDGLMDTTSALNPEDKMIKTYWNDLIQSGEIDGFPIGLQVVSPTFNDNEVCKFASWLFSKI</sequence>
<gene>
    <name type="primary">AMD2</name>
    <name type="synonym">AMDY</name>
    <name type="synonym">AMDY1</name>
    <name type="ordered locus">YDR242W</name>
    <name type="ORF">YD8419.09</name>
</gene>
<reference key="1">
    <citation type="journal article" date="1990" name="Nucleic Acids Res.">
        <title>Identification of a putative amidase gene in yeast Saccharomyces cerevisiae.</title>
        <authorList>
            <person name="Chang T.-H."/>
            <person name="Abelson J."/>
        </authorList>
    </citation>
    <scope>NUCLEOTIDE SEQUENCE [GENOMIC DNA]</scope>
</reference>
<reference key="2">
    <citation type="journal article" date="1997" name="Nature">
        <title>The nucleotide sequence of Saccharomyces cerevisiae chromosome IV.</title>
        <authorList>
            <person name="Jacq C."/>
            <person name="Alt-Moerbe J."/>
            <person name="Andre B."/>
            <person name="Arnold W."/>
            <person name="Bahr A."/>
            <person name="Ballesta J.P.G."/>
            <person name="Bargues M."/>
            <person name="Baron L."/>
            <person name="Becker A."/>
            <person name="Biteau N."/>
            <person name="Bloecker H."/>
            <person name="Blugeon C."/>
            <person name="Boskovic J."/>
            <person name="Brandt P."/>
            <person name="Brueckner M."/>
            <person name="Buitrago M.J."/>
            <person name="Coster F."/>
            <person name="Delaveau T."/>
            <person name="del Rey F."/>
            <person name="Dujon B."/>
            <person name="Eide L.G."/>
            <person name="Garcia-Cantalejo J.M."/>
            <person name="Goffeau A."/>
            <person name="Gomez-Peris A."/>
            <person name="Granotier C."/>
            <person name="Hanemann V."/>
            <person name="Hankeln T."/>
            <person name="Hoheisel J.D."/>
            <person name="Jaeger W."/>
            <person name="Jimenez A."/>
            <person name="Jonniaux J.-L."/>
            <person name="Kraemer C."/>
            <person name="Kuester H."/>
            <person name="Laamanen P."/>
            <person name="Legros Y."/>
            <person name="Louis E.J."/>
            <person name="Moeller-Rieker S."/>
            <person name="Monnet A."/>
            <person name="Moro M."/>
            <person name="Mueller-Auer S."/>
            <person name="Nussbaumer B."/>
            <person name="Paricio N."/>
            <person name="Paulin L."/>
            <person name="Perea J."/>
            <person name="Perez-Alonso M."/>
            <person name="Perez-Ortin J.E."/>
            <person name="Pohl T.M."/>
            <person name="Prydz H."/>
            <person name="Purnelle B."/>
            <person name="Rasmussen S.W."/>
            <person name="Remacha M.A."/>
            <person name="Revuelta J.L."/>
            <person name="Rieger M."/>
            <person name="Salom D."/>
            <person name="Saluz H.P."/>
            <person name="Saiz J.E."/>
            <person name="Saren A.-M."/>
            <person name="Schaefer M."/>
            <person name="Scharfe M."/>
            <person name="Schmidt E.R."/>
            <person name="Schneider C."/>
            <person name="Scholler P."/>
            <person name="Schwarz S."/>
            <person name="Soler-Mira A."/>
            <person name="Urrestarazu L.A."/>
            <person name="Verhasselt P."/>
            <person name="Vissers S."/>
            <person name="Voet M."/>
            <person name="Volckaert G."/>
            <person name="Wagner G."/>
            <person name="Wambutt R."/>
            <person name="Wedler E."/>
            <person name="Wedler H."/>
            <person name="Woelfl S."/>
            <person name="Harris D.E."/>
            <person name="Bowman S."/>
            <person name="Brown D."/>
            <person name="Churcher C.M."/>
            <person name="Connor R."/>
            <person name="Dedman K."/>
            <person name="Gentles S."/>
            <person name="Hamlin N."/>
            <person name="Hunt S."/>
            <person name="Jones L."/>
            <person name="McDonald S."/>
            <person name="Murphy L.D."/>
            <person name="Niblett D."/>
            <person name="Odell C."/>
            <person name="Oliver K."/>
            <person name="Rajandream M.A."/>
            <person name="Richards C."/>
            <person name="Shore L."/>
            <person name="Walsh S.V."/>
            <person name="Barrell B.G."/>
            <person name="Dietrich F.S."/>
            <person name="Mulligan J.T."/>
            <person name="Allen E."/>
            <person name="Araujo R."/>
            <person name="Aviles E."/>
            <person name="Berno A."/>
            <person name="Carpenter J."/>
            <person name="Chen E."/>
            <person name="Cherry J.M."/>
            <person name="Chung E."/>
            <person name="Duncan M."/>
            <person name="Hunicke-Smith S."/>
            <person name="Hyman R.W."/>
            <person name="Komp C."/>
            <person name="Lashkari D."/>
            <person name="Lew H."/>
            <person name="Lin D."/>
            <person name="Mosedale D."/>
            <person name="Nakahara K."/>
            <person name="Namath A."/>
            <person name="Oefner P."/>
            <person name="Oh C."/>
            <person name="Petel F.X."/>
            <person name="Roberts D."/>
            <person name="Schramm S."/>
            <person name="Schroeder M."/>
            <person name="Shogren T."/>
            <person name="Shroff N."/>
            <person name="Winant A."/>
            <person name="Yelton M.A."/>
            <person name="Botstein D."/>
            <person name="Davis R.W."/>
            <person name="Johnston M."/>
            <person name="Andrews S."/>
            <person name="Brinkman R."/>
            <person name="Cooper J."/>
            <person name="Ding H."/>
            <person name="Du Z."/>
            <person name="Favello A."/>
            <person name="Fulton L."/>
            <person name="Gattung S."/>
            <person name="Greco T."/>
            <person name="Hallsworth K."/>
            <person name="Hawkins J."/>
            <person name="Hillier L.W."/>
            <person name="Jier M."/>
            <person name="Johnson D."/>
            <person name="Johnston L."/>
            <person name="Kirsten J."/>
            <person name="Kucaba T."/>
            <person name="Langston Y."/>
            <person name="Latreille P."/>
            <person name="Le T."/>
            <person name="Mardis E."/>
            <person name="Menezes S."/>
            <person name="Miller N."/>
            <person name="Nhan M."/>
            <person name="Pauley A."/>
            <person name="Peluso D."/>
            <person name="Rifkin L."/>
            <person name="Riles L."/>
            <person name="Taich A."/>
            <person name="Trevaskis E."/>
            <person name="Vignati D."/>
            <person name="Wilcox L."/>
            <person name="Wohldman P."/>
            <person name="Vaudin M."/>
            <person name="Wilson R."/>
            <person name="Waterston R."/>
            <person name="Albermann K."/>
            <person name="Hani J."/>
            <person name="Heumann K."/>
            <person name="Kleine K."/>
            <person name="Mewes H.-W."/>
            <person name="Zollner A."/>
            <person name="Zaccaria P."/>
        </authorList>
    </citation>
    <scope>NUCLEOTIDE SEQUENCE [LARGE SCALE GENOMIC DNA]</scope>
    <source>
        <strain>ATCC 204508 / S288c</strain>
    </source>
</reference>
<reference key="3">
    <citation type="journal article" date="2014" name="G3 (Bethesda)">
        <title>The reference genome sequence of Saccharomyces cerevisiae: Then and now.</title>
        <authorList>
            <person name="Engel S.R."/>
            <person name="Dietrich F.S."/>
            <person name="Fisk D.G."/>
            <person name="Binkley G."/>
            <person name="Balakrishnan R."/>
            <person name="Costanzo M.C."/>
            <person name="Dwight S.S."/>
            <person name="Hitz B.C."/>
            <person name="Karra K."/>
            <person name="Nash R.S."/>
            <person name="Weng S."/>
            <person name="Wong E.D."/>
            <person name="Lloyd P."/>
            <person name="Skrzypek M.S."/>
            <person name="Miyasato S.R."/>
            <person name="Simison M."/>
            <person name="Cherry J.M."/>
        </authorList>
    </citation>
    <scope>GENOME REANNOTATION</scope>
    <source>
        <strain>ATCC 204508 / S288c</strain>
    </source>
</reference>
<reference key="4">
    <citation type="journal article" date="2007" name="Genome Res.">
        <title>Approaching a complete repository of sequence-verified protein-encoding clones for Saccharomyces cerevisiae.</title>
        <authorList>
            <person name="Hu Y."/>
            <person name="Rolfs A."/>
            <person name="Bhullar B."/>
            <person name="Murthy T.V.S."/>
            <person name="Zhu C."/>
            <person name="Berger M.F."/>
            <person name="Camargo A.A."/>
            <person name="Kelley F."/>
            <person name="McCarron S."/>
            <person name="Jepson D."/>
            <person name="Richardson A."/>
            <person name="Raphael J."/>
            <person name="Moreira D."/>
            <person name="Taycher E."/>
            <person name="Zuo D."/>
            <person name="Mohr S."/>
            <person name="Kane M.F."/>
            <person name="Williamson J."/>
            <person name="Simpson A.J.G."/>
            <person name="Bulyk M.L."/>
            <person name="Harlow E."/>
            <person name="Marsischky G."/>
            <person name="Kolodner R.D."/>
            <person name="LaBaer J."/>
        </authorList>
    </citation>
    <scope>NUCLEOTIDE SEQUENCE [GENOMIC DNA]</scope>
    <source>
        <strain>ATCC 204508 / S288c</strain>
    </source>
</reference>
<proteinExistence type="inferred from homology"/>
<evidence type="ECO:0000250" key="1"/>
<evidence type="ECO:0000305" key="2"/>
<organism>
    <name type="scientific">Saccharomyces cerevisiae (strain ATCC 204508 / S288c)</name>
    <name type="common">Baker's yeast</name>
    <dbReference type="NCBI Taxonomy" id="559292"/>
    <lineage>
        <taxon>Eukaryota</taxon>
        <taxon>Fungi</taxon>
        <taxon>Dikarya</taxon>
        <taxon>Ascomycota</taxon>
        <taxon>Saccharomycotina</taxon>
        <taxon>Saccharomycetes</taxon>
        <taxon>Saccharomycetales</taxon>
        <taxon>Saccharomycetaceae</taxon>
        <taxon>Saccharomyces</taxon>
    </lineage>
</organism>
<dbReference type="EC" id="3.5.1.4"/>
<dbReference type="EMBL" id="X56043">
    <property type="protein sequence ID" value="CAA39514.1"/>
    <property type="molecule type" value="Genomic_DNA"/>
</dbReference>
<dbReference type="EMBL" id="Z49701">
    <property type="protein sequence ID" value="CAA89728.1"/>
    <property type="molecule type" value="Genomic_DNA"/>
</dbReference>
<dbReference type="EMBL" id="AY723784">
    <property type="protein sequence ID" value="AAU09701.1"/>
    <property type="molecule type" value="Genomic_DNA"/>
</dbReference>
<dbReference type="EMBL" id="BK006938">
    <property type="protein sequence ID" value="DAA12082.1"/>
    <property type="molecule type" value="Genomic_DNA"/>
</dbReference>
<dbReference type="PIR" id="S54538">
    <property type="entry name" value="S54538"/>
</dbReference>
<dbReference type="RefSeq" id="NP_010528.3">
    <property type="nucleotide sequence ID" value="NM_001180550.3"/>
</dbReference>
<dbReference type="SMR" id="P22580"/>
<dbReference type="BioGRID" id="32293">
    <property type="interactions" value="75"/>
</dbReference>
<dbReference type="FunCoup" id="P22580">
    <property type="interactions" value="89"/>
</dbReference>
<dbReference type="MINT" id="P22580"/>
<dbReference type="STRING" id="4932.YDR242W"/>
<dbReference type="PaxDb" id="4932-YDR242W"/>
<dbReference type="PeptideAtlas" id="P22580"/>
<dbReference type="EnsemblFungi" id="YDR242W_mRNA">
    <property type="protein sequence ID" value="YDR242W"/>
    <property type="gene ID" value="YDR242W"/>
</dbReference>
<dbReference type="GeneID" id="851829"/>
<dbReference type="KEGG" id="sce:YDR242W"/>
<dbReference type="AGR" id="SGD:S000002650"/>
<dbReference type="SGD" id="S000002650">
    <property type="gene designation" value="AMD2"/>
</dbReference>
<dbReference type="VEuPathDB" id="FungiDB:YDR242W"/>
<dbReference type="eggNOG" id="KOG1212">
    <property type="taxonomic scope" value="Eukaryota"/>
</dbReference>
<dbReference type="HOGENOM" id="CLU_009600_9_2_1"/>
<dbReference type="InParanoid" id="P22580"/>
<dbReference type="OMA" id="YVGWLGK"/>
<dbReference type="OrthoDB" id="6428749at2759"/>
<dbReference type="BioCyc" id="YEAST:YDR242W-MONOMER"/>
<dbReference type="BioGRID-ORCS" id="851829">
    <property type="hits" value="0 hits in 10 CRISPR screens"/>
</dbReference>
<dbReference type="PRO" id="PR:P22580"/>
<dbReference type="Proteomes" id="UP000002311">
    <property type="component" value="Chromosome IV"/>
</dbReference>
<dbReference type="RNAct" id="P22580">
    <property type="molecule type" value="protein"/>
</dbReference>
<dbReference type="GO" id="GO:0004040">
    <property type="term" value="F:amidase activity"/>
    <property type="evidence" value="ECO:0007669"/>
    <property type="project" value="UniProtKB-EC"/>
</dbReference>
<dbReference type="GO" id="GO:0043605">
    <property type="term" value="P:amide catabolic process"/>
    <property type="evidence" value="ECO:0000318"/>
    <property type="project" value="GO_Central"/>
</dbReference>
<dbReference type="FunFam" id="3.90.1300.10:FF:000013">
    <property type="entry name" value="Amd2p"/>
    <property type="match status" value="1"/>
</dbReference>
<dbReference type="Gene3D" id="3.90.1300.10">
    <property type="entry name" value="Amidase signature (AS) domain"/>
    <property type="match status" value="1"/>
</dbReference>
<dbReference type="InterPro" id="IPR020556">
    <property type="entry name" value="Amidase_CS"/>
</dbReference>
<dbReference type="InterPro" id="IPR023631">
    <property type="entry name" value="Amidase_dom"/>
</dbReference>
<dbReference type="InterPro" id="IPR036928">
    <property type="entry name" value="AS_sf"/>
</dbReference>
<dbReference type="PANTHER" id="PTHR46072:SF11">
    <property type="entry name" value="AMIDASE-RELATED"/>
    <property type="match status" value="1"/>
</dbReference>
<dbReference type="PANTHER" id="PTHR46072">
    <property type="entry name" value="AMIDASE-RELATED-RELATED"/>
    <property type="match status" value="1"/>
</dbReference>
<dbReference type="Pfam" id="PF01425">
    <property type="entry name" value="Amidase"/>
    <property type="match status" value="1"/>
</dbReference>
<dbReference type="PIRSF" id="PIRSF001221">
    <property type="entry name" value="Amidase_fungi"/>
    <property type="match status" value="1"/>
</dbReference>
<dbReference type="SUPFAM" id="SSF75304">
    <property type="entry name" value="Amidase signature (AS) enzymes"/>
    <property type="match status" value="1"/>
</dbReference>
<dbReference type="PROSITE" id="PS00571">
    <property type="entry name" value="AMIDASES"/>
    <property type="match status" value="1"/>
</dbReference>
<keyword id="KW-0378">Hydrolase</keyword>
<keyword id="KW-1185">Reference proteome</keyword>
<comment type="catalytic activity">
    <reaction>
        <text>a monocarboxylic acid amide + H2O = a monocarboxylate + NH4(+)</text>
        <dbReference type="Rhea" id="RHEA:12020"/>
        <dbReference type="ChEBI" id="CHEBI:15377"/>
        <dbReference type="ChEBI" id="CHEBI:28938"/>
        <dbReference type="ChEBI" id="CHEBI:35757"/>
        <dbReference type="ChEBI" id="CHEBI:83628"/>
        <dbReference type="EC" id="3.5.1.4"/>
    </reaction>
</comment>
<comment type="similarity">
    <text evidence="2">Belongs to the amidase family.</text>
</comment>
<protein>
    <recommendedName>
        <fullName>Probable amidase</fullName>
        <ecNumber>3.5.1.4</ecNumber>
    </recommendedName>
</protein>